<comment type="function">
    <text evidence="1">Golgi membrane protein involved in vesicular trafficking.</text>
</comment>
<comment type="subcellular location">
    <subcellularLocation>
        <location evidence="1">Golgi apparatus membrane</location>
        <topology evidence="1">Multi-pass membrane protein</topology>
    </subcellularLocation>
</comment>
<comment type="similarity">
    <text evidence="3">Belongs to the TVP18 family.</text>
</comment>
<comment type="sequence caution" evidence="3">
    <conflict type="erroneous gene model prediction">
        <sequence resource="EMBL-CDS" id="EAT90712"/>
    </conflict>
</comment>
<sequence length="148" mass="16397">MTLAEEFKSRNFSIYGQWTGVLCIFLCFALGVANIFHPTFVIAFSIVCLVSSFVIIFIEIPLLLRICPTSPKFDAFIRKFSSNYMRAAIYGVMSVVQWISIWPQATSLIVAAIFLMVAAIFYALAGFKGQQFQGSKTLGGQGVAQMII</sequence>
<accession>Q0V0G4</accession>
<proteinExistence type="inferred from homology"/>
<protein>
    <recommendedName>
        <fullName>Golgi apparatus membrane protein TVP18</fullName>
    </recommendedName>
</protein>
<reference key="1">
    <citation type="journal article" date="2007" name="Plant Cell">
        <title>Dothideomycete-plant interactions illuminated by genome sequencing and EST analysis of the wheat pathogen Stagonospora nodorum.</title>
        <authorList>
            <person name="Hane J.K."/>
            <person name="Lowe R.G.T."/>
            <person name="Solomon P.S."/>
            <person name="Tan K.-C."/>
            <person name="Schoch C.L."/>
            <person name="Spatafora J.W."/>
            <person name="Crous P.W."/>
            <person name="Kodira C.D."/>
            <person name="Birren B.W."/>
            <person name="Galagan J.E."/>
            <person name="Torriani S.F.F."/>
            <person name="McDonald B.A."/>
            <person name="Oliver R.P."/>
        </authorList>
    </citation>
    <scope>NUCLEOTIDE SEQUENCE [LARGE SCALE GENOMIC DNA]</scope>
    <source>
        <strain>SN15 / ATCC MYA-4574 / FGSC 10173</strain>
    </source>
</reference>
<organism>
    <name type="scientific">Phaeosphaeria nodorum (strain SN15 / ATCC MYA-4574 / FGSC 10173)</name>
    <name type="common">Glume blotch fungus</name>
    <name type="synonym">Parastagonospora nodorum</name>
    <dbReference type="NCBI Taxonomy" id="321614"/>
    <lineage>
        <taxon>Eukaryota</taxon>
        <taxon>Fungi</taxon>
        <taxon>Dikarya</taxon>
        <taxon>Ascomycota</taxon>
        <taxon>Pezizomycotina</taxon>
        <taxon>Dothideomycetes</taxon>
        <taxon>Pleosporomycetidae</taxon>
        <taxon>Pleosporales</taxon>
        <taxon>Pleosporineae</taxon>
        <taxon>Phaeosphaeriaceae</taxon>
        <taxon>Parastagonospora</taxon>
    </lineage>
</organism>
<name>TVP18_PHANO</name>
<evidence type="ECO:0000250" key="1"/>
<evidence type="ECO:0000255" key="2"/>
<evidence type="ECO:0000305" key="3"/>
<gene>
    <name type="primary">TVP18</name>
    <name type="ORF">SNOG_02500</name>
</gene>
<dbReference type="EMBL" id="CH445327">
    <property type="protein sequence ID" value="EAT90712.1"/>
    <property type="status" value="ALT_SEQ"/>
    <property type="molecule type" value="Genomic_DNA"/>
</dbReference>
<dbReference type="RefSeq" id="XP_001793105.1">
    <property type="nucleotide sequence ID" value="XM_001793053.1"/>
</dbReference>
<dbReference type="FunCoup" id="Q0V0G4">
    <property type="interactions" value="36"/>
</dbReference>
<dbReference type="STRING" id="321614.Q0V0G4"/>
<dbReference type="GlyCosmos" id="Q0V0G4">
    <property type="glycosylation" value="1 site, No reported glycans"/>
</dbReference>
<dbReference type="GeneID" id="5969955"/>
<dbReference type="KEGG" id="pno:SNOG_02500"/>
<dbReference type="VEuPathDB" id="FungiDB:JI435_025000"/>
<dbReference type="eggNOG" id="ENOG502S3AC">
    <property type="taxonomic scope" value="Eukaryota"/>
</dbReference>
<dbReference type="InParanoid" id="Q0V0G4"/>
<dbReference type="OrthoDB" id="5591789at2759"/>
<dbReference type="Proteomes" id="UP000001055">
    <property type="component" value="Unassembled WGS sequence"/>
</dbReference>
<dbReference type="GO" id="GO:0000139">
    <property type="term" value="C:Golgi membrane"/>
    <property type="evidence" value="ECO:0000318"/>
    <property type="project" value="GO_Central"/>
</dbReference>
<dbReference type="GO" id="GO:0016192">
    <property type="term" value="P:vesicle-mediated transport"/>
    <property type="evidence" value="ECO:0000318"/>
    <property type="project" value="GO_Central"/>
</dbReference>
<dbReference type="InterPro" id="IPR019365">
    <property type="entry name" value="TVP18/Ca-channel_flower"/>
</dbReference>
<dbReference type="PANTHER" id="PTHR13314">
    <property type="entry name" value="CALCIUM CHANNEL FLOWER HOMOLOG"/>
    <property type="match status" value="1"/>
</dbReference>
<dbReference type="PANTHER" id="PTHR13314:SF2">
    <property type="entry name" value="CALCIUM CHANNEL FLOWER HOMOLOG"/>
    <property type="match status" value="1"/>
</dbReference>
<dbReference type="Pfam" id="PF10233">
    <property type="entry name" value="Cg6151-P"/>
    <property type="match status" value="1"/>
</dbReference>
<dbReference type="SMART" id="SM01077">
    <property type="entry name" value="Cg6151-P"/>
    <property type="match status" value="1"/>
</dbReference>
<keyword id="KW-0325">Glycoprotein</keyword>
<keyword id="KW-0333">Golgi apparatus</keyword>
<keyword id="KW-0472">Membrane</keyword>
<keyword id="KW-0812">Transmembrane</keyword>
<keyword id="KW-1133">Transmembrane helix</keyword>
<feature type="chain" id="PRO_0000343025" description="Golgi apparatus membrane protein TVP18">
    <location>
        <begin position="1"/>
        <end position="148"/>
    </location>
</feature>
<feature type="transmembrane region" description="Helical" evidence="2">
    <location>
        <begin position="12"/>
        <end position="32"/>
    </location>
</feature>
<feature type="transmembrane region" description="Helical" evidence="2">
    <location>
        <begin position="40"/>
        <end position="60"/>
    </location>
</feature>
<feature type="transmembrane region" description="Helical" evidence="2">
    <location>
        <begin position="82"/>
        <end position="101"/>
    </location>
</feature>
<feature type="transmembrane region" description="Helical" evidence="2">
    <location>
        <begin position="107"/>
        <end position="127"/>
    </location>
</feature>
<feature type="glycosylation site" description="N-linked (GlcNAc...) asparagine" evidence="2">
    <location>
        <position position="11"/>
    </location>
</feature>